<sequence length="258" mass="27783">MSSLFIAGHEFHSRLFTGTGKYASADAMMDSLTASESELVTLSLRRMDLKNQTDNILKPLQQQRIKLLPNTSGARTAKEAVFAAELAREALETNWVKLEIHPDPRYLMPDGMETLLAAEELIKKGFVVMPYVHADPVLCKRLEEVGCQCVMPLGSPIGSNMGLASRPFLEIIIEQSTVPVIIDAGIGAPSDAALALEIGADAVLVNTAMAVARQPAKMGKAFRLAVEAGRMAYESGLGERRVQAQATSPLTDFLGALS</sequence>
<accession>A6VXY2</accession>
<keyword id="KW-0963">Cytoplasm</keyword>
<keyword id="KW-0704">Schiff base</keyword>
<keyword id="KW-0784">Thiamine biosynthesis</keyword>
<keyword id="KW-0808">Transferase</keyword>
<comment type="function">
    <text evidence="1">Catalyzes the rearrangement of 1-deoxy-D-xylulose 5-phosphate (DXP) to produce the thiazole phosphate moiety of thiamine. Sulfur is provided by the thiocarboxylate moiety of the carrier protein ThiS. In vitro, sulfur can be provided by H(2)S.</text>
</comment>
<comment type="catalytic activity">
    <reaction evidence="1">
        <text>[ThiS sulfur-carrier protein]-C-terminal-Gly-aminoethanethioate + 2-iminoacetate + 1-deoxy-D-xylulose 5-phosphate = [ThiS sulfur-carrier protein]-C-terminal Gly-Gly + 2-[(2R,5Z)-2-carboxy-4-methylthiazol-5(2H)-ylidene]ethyl phosphate + 2 H2O + H(+)</text>
        <dbReference type="Rhea" id="RHEA:26297"/>
        <dbReference type="Rhea" id="RHEA-COMP:12909"/>
        <dbReference type="Rhea" id="RHEA-COMP:19908"/>
        <dbReference type="ChEBI" id="CHEBI:15377"/>
        <dbReference type="ChEBI" id="CHEBI:15378"/>
        <dbReference type="ChEBI" id="CHEBI:57792"/>
        <dbReference type="ChEBI" id="CHEBI:62899"/>
        <dbReference type="ChEBI" id="CHEBI:77846"/>
        <dbReference type="ChEBI" id="CHEBI:90778"/>
        <dbReference type="ChEBI" id="CHEBI:232372"/>
        <dbReference type="EC" id="2.8.1.10"/>
    </reaction>
</comment>
<comment type="pathway">
    <text evidence="1">Cofactor biosynthesis; thiamine diphosphate biosynthesis.</text>
</comment>
<comment type="subunit">
    <text evidence="1">Homotetramer. Forms heterodimers with either ThiH or ThiS.</text>
</comment>
<comment type="subcellular location">
    <subcellularLocation>
        <location evidence="1">Cytoplasm</location>
    </subcellularLocation>
</comment>
<comment type="similarity">
    <text evidence="1">Belongs to the ThiG family.</text>
</comment>
<name>THIG_MARMS</name>
<reference key="1">
    <citation type="submission" date="2007-06" db="EMBL/GenBank/DDBJ databases">
        <title>Complete sequence of Marinomonas sp. MWYL1.</title>
        <authorList>
            <consortium name="US DOE Joint Genome Institute"/>
            <person name="Copeland A."/>
            <person name="Lucas S."/>
            <person name="Lapidus A."/>
            <person name="Barry K."/>
            <person name="Glavina del Rio T."/>
            <person name="Dalin E."/>
            <person name="Tice H."/>
            <person name="Pitluck S."/>
            <person name="Kiss H."/>
            <person name="Brettin T."/>
            <person name="Bruce D."/>
            <person name="Detter J.C."/>
            <person name="Han C."/>
            <person name="Schmutz J."/>
            <person name="Larimer F."/>
            <person name="Land M."/>
            <person name="Hauser L."/>
            <person name="Kyrpides N."/>
            <person name="Kim E."/>
            <person name="Johnston A.W.B."/>
            <person name="Todd J.D."/>
            <person name="Rogers R."/>
            <person name="Wexler M."/>
            <person name="Bond P.L."/>
            <person name="Li Y."/>
            <person name="Richardson P."/>
        </authorList>
    </citation>
    <scope>NUCLEOTIDE SEQUENCE [LARGE SCALE GENOMIC DNA]</scope>
    <source>
        <strain>MWYL1</strain>
    </source>
</reference>
<evidence type="ECO:0000255" key="1">
    <source>
        <dbReference type="HAMAP-Rule" id="MF_00443"/>
    </source>
</evidence>
<dbReference type="EC" id="2.8.1.10" evidence="1"/>
<dbReference type="EMBL" id="CP000749">
    <property type="protein sequence ID" value="ABR71311.1"/>
    <property type="molecule type" value="Genomic_DNA"/>
</dbReference>
<dbReference type="SMR" id="A6VXY2"/>
<dbReference type="STRING" id="400668.Mmwyl1_2389"/>
<dbReference type="KEGG" id="mmw:Mmwyl1_2389"/>
<dbReference type="eggNOG" id="COG2022">
    <property type="taxonomic scope" value="Bacteria"/>
</dbReference>
<dbReference type="HOGENOM" id="CLU_062233_1_0_6"/>
<dbReference type="OrthoDB" id="9805935at2"/>
<dbReference type="UniPathway" id="UPA00060"/>
<dbReference type="GO" id="GO:0005737">
    <property type="term" value="C:cytoplasm"/>
    <property type="evidence" value="ECO:0007669"/>
    <property type="project" value="UniProtKB-SubCell"/>
</dbReference>
<dbReference type="GO" id="GO:1990107">
    <property type="term" value="F:thiazole synthase activity"/>
    <property type="evidence" value="ECO:0007669"/>
    <property type="project" value="UniProtKB-EC"/>
</dbReference>
<dbReference type="GO" id="GO:0009229">
    <property type="term" value="P:thiamine diphosphate biosynthetic process"/>
    <property type="evidence" value="ECO:0007669"/>
    <property type="project" value="UniProtKB-UniRule"/>
</dbReference>
<dbReference type="CDD" id="cd04728">
    <property type="entry name" value="ThiG"/>
    <property type="match status" value="1"/>
</dbReference>
<dbReference type="FunFam" id="3.20.20.70:FF:000049">
    <property type="entry name" value="Thiazole synthase"/>
    <property type="match status" value="1"/>
</dbReference>
<dbReference type="Gene3D" id="3.20.20.70">
    <property type="entry name" value="Aldolase class I"/>
    <property type="match status" value="1"/>
</dbReference>
<dbReference type="HAMAP" id="MF_00443">
    <property type="entry name" value="ThiG"/>
    <property type="match status" value="1"/>
</dbReference>
<dbReference type="InterPro" id="IPR013785">
    <property type="entry name" value="Aldolase_TIM"/>
</dbReference>
<dbReference type="InterPro" id="IPR033983">
    <property type="entry name" value="Thiazole_synthase_ThiG"/>
</dbReference>
<dbReference type="InterPro" id="IPR008867">
    <property type="entry name" value="ThiG"/>
</dbReference>
<dbReference type="PANTHER" id="PTHR34266">
    <property type="entry name" value="THIAZOLE SYNTHASE"/>
    <property type="match status" value="1"/>
</dbReference>
<dbReference type="PANTHER" id="PTHR34266:SF2">
    <property type="entry name" value="THIAZOLE SYNTHASE"/>
    <property type="match status" value="1"/>
</dbReference>
<dbReference type="Pfam" id="PF05690">
    <property type="entry name" value="ThiG"/>
    <property type="match status" value="1"/>
</dbReference>
<dbReference type="SUPFAM" id="SSF110399">
    <property type="entry name" value="ThiG-like"/>
    <property type="match status" value="1"/>
</dbReference>
<proteinExistence type="inferred from homology"/>
<protein>
    <recommendedName>
        <fullName evidence="1">Thiazole synthase</fullName>
        <ecNumber evidence="1">2.8.1.10</ecNumber>
    </recommendedName>
</protein>
<organism>
    <name type="scientific">Marinomonas sp. (strain MWYL1)</name>
    <dbReference type="NCBI Taxonomy" id="400668"/>
    <lineage>
        <taxon>Bacteria</taxon>
        <taxon>Pseudomonadati</taxon>
        <taxon>Pseudomonadota</taxon>
        <taxon>Gammaproteobacteria</taxon>
        <taxon>Oceanospirillales</taxon>
        <taxon>Oceanospirillaceae</taxon>
        <taxon>Marinomonas</taxon>
    </lineage>
</organism>
<gene>
    <name evidence="1" type="primary">thiG</name>
    <name type="ordered locus">Mmwyl1_2389</name>
</gene>
<feature type="chain" id="PRO_1000196872" description="Thiazole synthase">
    <location>
        <begin position="1"/>
        <end position="258"/>
    </location>
</feature>
<feature type="active site" description="Schiff-base intermediate with DXP" evidence="1">
    <location>
        <position position="97"/>
    </location>
</feature>
<feature type="binding site" evidence="1">
    <location>
        <position position="158"/>
    </location>
    <ligand>
        <name>1-deoxy-D-xylulose 5-phosphate</name>
        <dbReference type="ChEBI" id="CHEBI:57792"/>
    </ligand>
</feature>
<feature type="binding site" evidence="1">
    <location>
        <begin position="184"/>
        <end position="185"/>
    </location>
    <ligand>
        <name>1-deoxy-D-xylulose 5-phosphate</name>
        <dbReference type="ChEBI" id="CHEBI:57792"/>
    </ligand>
</feature>
<feature type="binding site" evidence="1">
    <location>
        <begin position="206"/>
        <end position="207"/>
    </location>
    <ligand>
        <name>1-deoxy-D-xylulose 5-phosphate</name>
        <dbReference type="ChEBI" id="CHEBI:57792"/>
    </ligand>
</feature>